<feature type="signal peptide" evidence="1">
    <location>
        <begin position="1"/>
        <end position="19"/>
    </location>
</feature>
<feature type="chain" id="PRO_0000031775" description="Putative amino-acid ABC transporter-binding protein YhdW">
    <location>
        <begin position="20"/>
        <end position="341"/>
    </location>
</feature>
<sequence length="341" mass="37033">MKKMMIATLAAASVLLAVANQAHAGATLDAVQKKGFVQCGISDGLPGFSYADADGKFSGIDVDVCRGVAAAVFGDDTKVKYTPLTAKERFTALQSGEVDLLSRNTTWTSSRDAGMGMAFTGVTYYDGIGFLTHDKAGLKSAKELDGATVCIQAGTDTELNVADYFKANNMKYTPVTFDRSDESAKALESGRCDTLASDQSQLYALRIKLSNPAEWIVLPEVISKEPLGPVVRRGDDEWFSIVRWTLFAMLNAEEMGINSQNVDEKAANPATPDMAHLLGKEGDYGKDLKLDNKWAYNIIKQVGNYSEIFERNVGSESPLKIKRGQNNLWNNGGIQYAPPVR</sequence>
<dbReference type="EMBL" id="AE005174">
    <property type="protein sequence ID" value="AAG58397.1"/>
    <property type="status" value="ALT_INIT"/>
    <property type="molecule type" value="Genomic_DNA"/>
</dbReference>
<dbReference type="EMBL" id="BA000007">
    <property type="protein sequence ID" value="BAB37564.2"/>
    <property type="molecule type" value="Genomic_DNA"/>
</dbReference>
<dbReference type="PIR" id="A85992">
    <property type="entry name" value="A85992"/>
</dbReference>
<dbReference type="PIR" id="E91146">
    <property type="entry name" value="E91146"/>
</dbReference>
<dbReference type="RefSeq" id="NP_312168.2">
    <property type="nucleotide sequence ID" value="NC_002695.1"/>
</dbReference>
<dbReference type="RefSeq" id="WP_000738579.1">
    <property type="nucleotide sequence ID" value="NZ_VOAI01000014.1"/>
</dbReference>
<dbReference type="SMR" id="P58068"/>
<dbReference type="STRING" id="155864.Z4629"/>
<dbReference type="GeneID" id="916011"/>
<dbReference type="KEGG" id="ece:Z4629"/>
<dbReference type="KEGG" id="ecs:ECs_4141"/>
<dbReference type="PATRIC" id="fig|386585.9.peg.4324"/>
<dbReference type="eggNOG" id="COG0834">
    <property type="taxonomic scope" value="Bacteria"/>
</dbReference>
<dbReference type="HOGENOM" id="CLU_019602_3_2_6"/>
<dbReference type="OMA" id="RNTTWTF"/>
<dbReference type="Proteomes" id="UP000000558">
    <property type="component" value="Chromosome"/>
</dbReference>
<dbReference type="Proteomes" id="UP000002519">
    <property type="component" value="Chromosome"/>
</dbReference>
<dbReference type="GO" id="GO:0030288">
    <property type="term" value="C:outer membrane-bounded periplasmic space"/>
    <property type="evidence" value="ECO:0007669"/>
    <property type="project" value="UniProtKB-ARBA"/>
</dbReference>
<dbReference type="GO" id="GO:0006865">
    <property type="term" value="P:amino acid transport"/>
    <property type="evidence" value="ECO:0007669"/>
    <property type="project" value="UniProtKB-KW"/>
</dbReference>
<dbReference type="CDD" id="cd13692">
    <property type="entry name" value="PBP2_BztA"/>
    <property type="match status" value="1"/>
</dbReference>
<dbReference type="Gene3D" id="3.40.190.10">
    <property type="entry name" value="Periplasmic binding protein-like II"/>
    <property type="match status" value="2"/>
</dbReference>
<dbReference type="InterPro" id="IPR051455">
    <property type="entry name" value="Bact_solute-bind_prot3"/>
</dbReference>
<dbReference type="InterPro" id="IPR018313">
    <property type="entry name" value="SBP_3_CS"/>
</dbReference>
<dbReference type="InterPro" id="IPR001638">
    <property type="entry name" value="Solute-binding_3/MltF_N"/>
</dbReference>
<dbReference type="PANTHER" id="PTHR30085">
    <property type="entry name" value="AMINO ACID ABC TRANSPORTER PERMEASE"/>
    <property type="match status" value="1"/>
</dbReference>
<dbReference type="PANTHER" id="PTHR30085:SF7">
    <property type="entry name" value="AMINO-ACID ABC TRANSPORTER-BINDING PROTEIN YHDW-RELATED"/>
    <property type="match status" value="1"/>
</dbReference>
<dbReference type="Pfam" id="PF00497">
    <property type="entry name" value="SBP_bac_3"/>
    <property type="match status" value="1"/>
</dbReference>
<dbReference type="SMART" id="SM00062">
    <property type="entry name" value="PBPb"/>
    <property type="match status" value="1"/>
</dbReference>
<dbReference type="SUPFAM" id="SSF53850">
    <property type="entry name" value="Periplasmic binding protein-like II"/>
    <property type="match status" value="1"/>
</dbReference>
<dbReference type="PROSITE" id="PS01039">
    <property type="entry name" value="SBP_BACTERIAL_3"/>
    <property type="match status" value="1"/>
</dbReference>
<comment type="function">
    <text>Probably part of the binding-protein-dependent transport system YdhWXYZ for an amino acid.</text>
</comment>
<comment type="subcellular location">
    <subcellularLocation>
        <location evidence="2">Periplasm</location>
    </subcellularLocation>
</comment>
<comment type="similarity">
    <text evidence="2">Belongs to the bacterial solute-binding protein 3 family.</text>
</comment>
<comment type="sequence caution" evidence="2">
    <conflict type="erroneous initiation">
        <sequence resource="EMBL-CDS" id="AAG58397"/>
    </conflict>
    <text>Truncated N-terminus.</text>
</comment>
<gene>
    <name type="primary">yhdW</name>
    <name type="ordered locus">Z4629</name>
    <name type="ordered locus">ECs4141</name>
</gene>
<name>YHDW_ECO57</name>
<proteinExistence type="inferred from homology"/>
<reference key="1">
    <citation type="journal article" date="2001" name="Nature">
        <title>Genome sequence of enterohaemorrhagic Escherichia coli O157:H7.</title>
        <authorList>
            <person name="Perna N.T."/>
            <person name="Plunkett G. III"/>
            <person name="Burland V."/>
            <person name="Mau B."/>
            <person name="Glasner J.D."/>
            <person name="Rose D.J."/>
            <person name="Mayhew G.F."/>
            <person name="Evans P.S."/>
            <person name="Gregor J."/>
            <person name="Kirkpatrick H.A."/>
            <person name="Posfai G."/>
            <person name="Hackett J."/>
            <person name="Klink S."/>
            <person name="Boutin A."/>
            <person name="Shao Y."/>
            <person name="Miller L."/>
            <person name="Grotbeck E.J."/>
            <person name="Davis N.W."/>
            <person name="Lim A."/>
            <person name="Dimalanta E.T."/>
            <person name="Potamousis K."/>
            <person name="Apodaca J."/>
            <person name="Anantharaman T.S."/>
            <person name="Lin J."/>
            <person name="Yen G."/>
            <person name="Schwartz D.C."/>
            <person name="Welch R.A."/>
            <person name="Blattner F.R."/>
        </authorList>
    </citation>
    <scope>NUCLEOTIDE SEQUENCE [LARGE SCALE GENOMIC DNA]</scope>
    <source>
        <strain>O157:H7 / EDL933 / ATCC 700927 / EHEC</strain>
    </source>
</reference>
<reference key="2">
    <citation type="journal article" date="2001" name="DNA Res.">
        <title>Complete genome sequence of enterohemorrhagic Escherichia coli O157:H7 and genomic comparison with a laboratory strain K-12.</title>
        <authorList>
            <person name="Hayashi T."/>
            <person name="Makino K."/>
            <person name="Ohnishi M."/>
            <person name="Kurokawa K."/>
            <person name="Ishii K."/>
            <person name="Yokoyama K."/>
            <person name="Han C.-G."/>
            <person name="Ohtsubo E."/>
            <person name="Nakayama K."/>
            <person name="Murata T."/>
            <person name="Tanaka M."/>
            <person name="Tobe T."/>
            <person name="Iida T."/>
            <person name="Takami H."/>
            <person name="Honda T."/>
            <person name="Sasakawa C."/>
            <person name="Ogasawara N."/>
            <person name="Yasunaga T."/>
            <person name="Kuhara S."/>
            <person name="Shiba T."/>
            <person name="Hattori M."/>
            <person name="Shinagawa H."/>
        </authorList>
    </citation>
    <scope>NUCLEOTIDE SEQUENCE [LARGE SCALE GENOMIC DNA]</scope>
    <source>
        <strain>O157:H7 / Sakai / RIMD 0509952 / EHEC</strain>
    </source>
</reference>
<organism>
    <name type="scientific">Escherichia coli O157:H7</name>
    <dbReference type="NCBI Taxonomy" id="83334"/>
    <lineage>
        <taxon>Bacteria</taxon>
        <taxon>Pseudomonadati</taxon>
        <taxon>Pseudomonadota</taxon>
        <taxon>Gammaproteobacteria</taxon>
        <taxon>Enterobacterales</taxon>
        <taxon>Enterobacteriaceae</taxon>
        <taxon>Escherichia</taxon>
    </lineage>
</organism>
<keyword id="KW-0029">Amino-acid transport</keyword>
<keyword id="KW-0574">Periplasm</keyword>
<keyword id="KW-1185">Reference proteome</keyword>
<keyword id="KW-0732">Signal</keyword>
<keyword id="KW-0813">Transport</keyword>
<protein>
    <recommendedName>
        <fullName>Putative amino-acid ABC transporter-binding protein YhdW</fullName>
    </recommendedName>
</protein>
<evidence type="ECO:0000255" key="1"/>
<evidence type="ECO:0000305" key="2"/>
<accession>P58068</accession>